<protein>
    <recommendedName>
        <fullName evidence="1">Elongation factor 4</fullName>
        <shortName evidence="1">EF-4</shortName>
        <ecNumber evidence="1">3.6.5.n1</ecNumber>
    </recommendedName>
    <alternativeName>
        <fullName evidence="1">Ribosomal back-translocase LepA</fullName>
    </alternativeName>
</protein>
<name>LEPA_SALDC</name>
<accession>B5FRC7</accession>
<proteinExistence type="inferred from homology"/>
<evidence type="ECO:0000255" key="1">
    <source>
        <dbReference type="HAMAP-Rule" id="MF_00071"/>
    </source>
</evidence>
<reference key="1">
    <citation type="journal article" date="2011" name="J. Bacteriol.">
        <title>Comparative genomics of 28 Salmonella enterica isolates: evidence for CRISPR-mediated adaptive sublineage evolution.</title>
        <authorList>
            <person name="Fricke W.F."/>
            <person name="Mammel M.K."/>
            <person name="McDermott P.F."/>
            <person name="Tartera C."/>
            <person name="White D.G."/>
            <person name="Leclerc J.E."/>
            <person name="Ravel J."/>
            <person name="Cebula T.A."/>
        </authorList>
    </citation>
    <scope>NUCLEOTIDE SEQUENCE [LARGE SCALE GENOMIC DNA]</scope>
    <source>
        <strain>CT_02021853</strain>
    </source>
</reference>
<keyword id="KW-0997">Cell inner membrane</keyword>
<keyword id="KW-1003">Cell membrane</keyword>
<keyword id="KW-0342">GTP-binding</keyword>
<keyword id="KW-0378">Hydrolase</keyword>
<keyword id="KW-0472">Membrane</keyword>
<keyword id="KW-0547">Nucleotide-binding</keyword>
<keyword id="KW-0648">Protein biosynthesis</keyword>
<gene>
    <name evidence="1" type="primary">lepA</name>
    <name type="ordered locus">SeD_A2962</name>
</gene>
<comment type="function">
    <text evidence="1">Required for accurate and efficient protein synthesis under certain stress conditions. May act as a fidelity factor of the translation reaction, by catalyzing a one-codon backward translocation of tRNAs on improperly translocated ribosomes. Back-translocation proceeds from a post-translocation (POST) complex to a pre-translocation (PRE) complex, thus giving elongation factor G a second chance to translocate the tRNAs correctly. Binds to ribosomes in a GTP-dependent manner.</text>
</comment>
<comment type="catalytic activity">
    <reaction evidence="1">
        <text>GTP + H2O = GDP + phosphate + H(+)</text>
        <dbReference type="Rhea" id="RHEA:19669"/>
        <dbReference type="ChEBI" id="CHEBI:15377"/>
        <dbReference type="ChEBI" id="CHEBI:15378"/>
        <dbReference type="ChEBI" id="CHEBI:37565"/>
        <dbReference type="ChEBI" id="CHEBI:43474"/>
        <dbReference type="ChEBI" id="CHEBI:58189"/>
        <dbReference type="EC" id="3.6.5.n1"/>
    </reaction>
</comment>
<comment type="subcellular location">
    <subcellularLocation>
        <location evidence="1">Cell inner membrane</location>
        <topology evidence="1">Peripheral membrane protein</topology>
        <orientation evidence="1">Cytoplasmic side</orientation>
    </subcellularLocation>
</comment>
<comment type="similarity">
    <text evidence="1">Belongs to the TRAFAC class translation factor GTPase superfamily. Classic translation factor GTPase family. LepA subfamily.</text>
</comment>
<feature type="chain" id="PRO_1000092439" description="Elongation factor 4">
    <location>
        <begin position="1"/>
        <end position="599"/>
    </location>
</feature>
<feature type="domain" description="tr-type G">
    <location>
        <begin position="2"/>
        <end position="184"/>
    </location>
</feature>
<feature type="binding site" evidence="1">
    <location>
        <begin position="14"/>
        <end position="19"/>
    </location>
    <ligand>
        <name>GTP</name>
        <dbReference type="ChEBI" id="CHEBI:37565"/>
    </ligand>
</feature>
<feature type="binding site" evidence="1">
    <location>
        <begin position="131"/>
        <end position="134"/>
    </location>
    <ligand>
        <name>GTP</name>
        <dbReference type="ChEBI" id="CHEBI:37565"/>
    </ligand>
</feature>
<sequence>MKNIRNFSIIAHIDHGKSTLSDRIIQICGGLSDREMEAQVLDSMDLERERGITIKAQSVTLDFKASDGETYQLNFIDTPGHVDFSYEVSRSLAACEGALLVVDAGQGVEAQTLANCYTAMEMDLEVVPVLNKIDLPAADPERVAEEIEDIVGIDATDAVRCSAKTGVGVTDVLERLVRDIPPPQGDPDGPLQALIIDSWFDNYLGVVSLVRIKNGTMRKGDKIKVMSTGQTYNADRLGIFTPKQVDRTELKCGEVGWLVCAIKDILGAPVGDTLTSARNPAEKALPGFKKVKPQVYAGLFPVSSDDYESFRDALGKLSLNDASLFYEPESSSALGFGFRCGFLGLLHMEIIQERLEREYDLDLITTAPTVVYEVETTAKETIYVDSPSKLPPLNNIYELREPIAECHMLLPQAYLGNVITLCIEKRGVQTNMVYHGNQVALTYEIPMAEVVLDFFDRLKSTSRGYASLDYNFKRFQASDMVRVDVLINNERVDALALITHRDNSQSRGRELVEKMKDLIPRQQFDIAIQAAIGTHIIARSTVKQLRKNVLAKCYGGDISRKKKLLQKQKEGKKRMKQIGNVELPQEAFLAILHVGKDNK</sequence>
<dbReference type="EC" id="3.6.5.n1" evidence="1"/>
<dbReference type="EMBL" id="CP001144">
    <property type="protein sequence ID" value="ACH78076.1"/>
    <property type="molecule type" value="Genomic_DNA"/>
</dbReference>
<dbReference type="RefSeq" id="WP_000790154.1">
    <property type="nucleotide sequence ID" value="NC_011205.1"/>
</dbReference>
<dbReference type="SMR" id="B5FRC7"/>
<dbReference type="KEGG" id="sed:SeD_A2962"/>
<dbReference type="HOGENOM" id="CLU_009995_3_3_6"/>
<dbReference type="Proteomes" id="UP000008322">
    <property type="component" value="Chromosome"/>
</dbReference>
<dbReference type="GO" id="GO:0005886">
    <property type="term" value="C:plasma membrane"/>
    <property type="evidence" value="ECO:0007669"/>
    <property type="project" value="UniProtKB-SubCell"/>
</dbReference>
<dbReference type="GO" id="GO:0005525">
    <property type="term" value="F:GTP binding"/>
    <property type="evidence" value="ECO:0007669"/>
    <property type="project" value="UniProtKB-UniRule"/>
</dbReference>
<dbReference type="GO" id="GO:0003924">
    <property type="term" value="F:GTPase activity"/>
    <property type="evidence" value="ECO:0007669"/>
    <property type="project" value="UniProtKB-UniRule"/>
</dbReference>
<dbReference type="GO" id="GO:0097216">
    <property type="term" value="F:guanosine tetraphosphate binding"/>
    <property type="evidence" value="ECO:0007669"/>
    <property type="project" value="UniProtKB-ARBA"/>
</dbReference>
<dbReference type="GO" id="GO:0043022">
    <property type="term" value="F:ribosome binding"/>
    <property type="evidence" value="ECO:0007669"/>
    <property type="project" value="UniProtKB-UniRule"/>
</dbReference>
<dbReference type="GO" id="GO:0003746">
    <property type="term" value="F:translation elongation factor activity"/>
    <property type="evidence" value="ECO:0007669"/>
    <property type="project" value="UniProtKB-UniRule"/>
</dbReference>
<dbReference type="GO" id="GO:0045727">
    <property type="term" value="P:positive regulation of translation"/>
    <property type="evidence" value="ECO:0007669"/>
    <property type="project" value="UniProtKB-UniRule"/>
</dbReference>
<dbReference type="CDD" id="cd03699">
    <property type="entry name" value="EF4_II"/>
    <property type="match status" value="1"/>
</dbReference>
<dbReference type="CDD" id="cd16260">
    <property type="entry name" value="EF4_III"/>
    <property type="match status" value="1"/>
</dbReference>
<dbReference type="CDD" id="cd01890">
    <property type="entry name" value="LepA"/>
    <property type="match status" value="1"/>
</dbReference>
<dbReference type="CDD" id="cd03709">
    <property type="entry name" value="lepA_C"/>
    <property type="match status" value="1"/>
</dbReference>
<dbReference type="FunFam" id="3.30.70.240:FF:000005">
    <property type="entry name" value="Elongation factor 4"/>
    <property type="match status" value="1"/>
</dbReference>
<dbReference type="FunFam" id="3.40.50.300:FF:000078">
    <property type="entry name" value="Elongation factor 4"/>
    <property type="match status" value="1"/>
</dbReference>
<dbReference type="FunFam" id="2.40.30.10:FF:000015">
    <property type="entry name" value="Translation factor GUF1, mitochondrial"/>
    <property type="match status" value="1"/>
</dbReference>
<dbReference type="FunFam" id="3.30.70.2570:FF:000001">
    <property type="entry name" value="Translation factor GUF1, mitochondrial"/>
    <property type="match status" value="1"/>
</dbReference>
<dbReference type="FunFam" id="3.30.70.870:FF:000004">
    <property type="entry name" value="Translation factor GUF1, mitochondrial"/>
    <property type="match status" value="1"/>
</dbReference>
<dbReference type="Gene3D" id="3.30.70.240">
    <property type="match status" value="1"/>
</dbReference>
<dbReference type="Gene3D" id="3.30.70.2570">
    <property type="entry name" value="Elongation factor 4, C-terminal domain"/>
    <property type="match status" value="1"/>
</dbReference>
<dbReference type="Gene3D" id="3.30.70.870">
    <property type="entry name" value="Elongation Factor G (Translational Gtpase), domain 3"/>
    <property type="match status" value="1"/>
</dbReference>
<dbReference type="Gene3D" id="3.40.50.300">
    <property type="entry name" value="P-loop containing nucleotide triphosphate hydrolases"/>
    <property type="match status" value="1"/>
</dbReference>
<dbReference type="Gene3D" id="2.40.30.10">
    <property type="entry name" value="Translation factors"/>
    <property type="match status" value="1"/>
</dbReference>
<dbReference type="HAMAP" id="MF_00071">
    <property type="entry name" value="LepA"/>
    <property type="match status" value="1"/>
</dbReference>
<dbReference type="InterPro" id="IPR006297">
    <property type="entry name" value="EF-4"/>
</dbReference>
<dbReference type="InterPro" id="IPR035647">
    <property type="entry name" value="EFG_III/V"/>
</dbReference>
<dbReference type="InterPro" id="IPR000640">
    <property type="entry name" value="EFG_V-like"/>
</dbReference>
<dbReference type="InterPro" id="IPR004161">
    <property type="entry name" value="EFTu-like_2"/>
</dbReference>
<dbReference type="InterPro" id="IPR031157">
    <property type="entry name" value="G_TR_CS"/>
</dbReference>
<dbReference type="InterPro" id="IPR038363">
    <property type="entry name" value="LepA_C_sf"/>
</dbReference>
<dbReference type="InterPro" id="IPR013842">
    <property type="entry name" value="LepA_CTD"/>
</dbReference>
<dbReference type="InterPro" id="IPR035654">
    <property type="entry name" value="LepA_IV"/>
</dbReference>
<dbReference type="InterPro" id="IPR027417">
    <property type="entry name" value="P-loop_NTPase"/>
</dbReference>
<dbReference type="InterPro" id="IPR005225">
    <property type="entry name" value="Small_GTP-bd"/>
</dbReference>
<dbReference type="InterPro" id="IPR000795">
    <property type="entry name" value="T_Tr_GTP-bd_dom"/>
</dbReference>
<dbReference type="NCBIfam" id="TIGR01393">
    <property type="entry name" value="lepA"/>
    <property type="match status" value="1"/>
</dbReference>
<dbReference type="NCBIfam" id="TIGR00231">
    <property type="entry name" value="small_GTP"/>
    <property type="match status" value="1"/>
</dbReference>
<dbReference type="PANTHER" id="PTHR43512:SF4">
    <property type="entry name" value="TRANSLATION FACTOR GUF1 HOMOLOG, CHLOROPLASTIC"/>
    <property type="match status" value="1"/>
</dbReference>
<dbReference type="PANTHER" id="PTHR43512">
    <property type="entry name" value="TRANSLATION FACTOR GUF1-RELATED"/>
    <property type="match status" value="1"/>
</dbReference>
<dbReference type="Pfam" id="PF00679">
    <property type="entry name" value="EFG_C"/>
    <property type="match status" value="1"/>
</dbReference>
<dbReference type="Pfam" id="PF00009">
    <property type="entry name" value="GTP_EFTU"/>
    <property type="match status" value="1"/>
</dbReference>
<dbReference type="Pfam" id="PF03144">
    <property type="entry name" value="GTP_EFTU_D2"/>
    <property type="match status" value="1"/>
</dbReference>
<dbReference type="Pfam" id="PF06421">
    <property type="entry name" value="LepA_C"/>
    <property type="match status" value="1"/>
</dbReference>
<dbReference type="PRINTS" id="PR00315">
    <property type="entry name" value="ELONGATNFCT"/>
</dbReference>
<dbReference type="SUPFAM" id="SSF54980">
    <property type="entry name" value="EF-G C-terminal domain-like"/>
    <property type="match status" value="2"/>
</dbReference>
<dbReference type="SUPFAM" id="SSF52540">
    <property type="entry name" value="P-loop containing nucleoside triphosphate hydrolases"/>
    <property type="match status" value="1"/>
</dbReference>
<dbReference type="PROSITE" id="PS00301">
    <property type="entry name" value="G_TR_1"/>
    <property type="match status" value="1"/>
</dbReference>
<dbReference type="PROSITE" id="PS51722">
    <property type="entry name" value="G_TR_2"/>
    <property type="match status" value="1"/>
</dbReference>
<organism>
    <name type="scientific">Salmonella dublin (strain CT_02021853)</name>
    <dbReference type="NCBI Taxonomy" id="439851"/>
    <lineage>
        <taxon>Bacteria</taxon>
        <taxon>Pseudomonadati</taxon>
        <taxon>Pseudomonadota</taxon>
        <taxon>Gammaproteobacteria</taxon>
        <taxon>Enterobacterales</taxon>
        <taxon>Enterobacteriaceae</taxon>
        <taxon>Salmonella</taxon>
    </lineage>
</organism>